<reference key="1">
    <citation type="journal article" date="2004" name="Nat. Biotechnol.">
        <title>The genome sequence of the capnophilic rumen bacterium Mannheimia succiniciproducens.</title>
        <authorList>
            <person name="Hong S.H."/>
            <person name="Kim J.S."/>
            <person name="Lee S.Y."/>
            <person name="In Y.H."/>
            <person name="Choi S.S."/>
            <person name="Rih J.-K."/>
            <person name="Kim C.H."/>
            <person name="Jeong H."/>
            <person name="Hur C.G."/>
            <person name="Kim J.J."/>
        </authorList>
    </citation>
    <scope>NUCLEOTIDE SEQUENCE [LARGE SCALE GENOMIC DNA]</scope>
    <source>
        <strain>KCTC 0769BP / MBEL55E</strain>
    </source>
</reference>
<sequence>MTAQSAQSDNQVLLTMTNVSKSFPGVKALDKANLTVKSHSVHALMGENGAGKSTLLKCLFGIYAKDEGEILFLGKPVNFKTSKEALENGISMVHQELNLVRQRNVMDNLWLGRYPLKGVFVDHTKMYNDTKAIFDELDIDIDPREKVANLSVSQMQMIEIAKAFSYNAKIVIMDEPTSSLSEKEVEHLFKIIEKLKDRGCGIVYISHKMDEIFKICDEITILRDGKWINTVPVKGSTMEQIVAMMVGRELTQRFPPKINEPKEVILEVEHLTALNQPSIQDINFELRKGEILGIAGLVGAKRTDIVETIFGVRERKSGTVKLHGKIMKNRTALEAINNGFALVTEERRSTGIYANLSIEFNSLISNMKSYMNKWGLLSDKKMKSDTQWVIDSMNVKTPSHKTTIGSLSGGNQQKVVIGRWLLTQPEILMLDEPTRGIDVGAKYEIYQLIMQLAQKDKGIIMISSEMPELLGITDRILVMSNGKVAGIVETAKTSQEEILQLAAKYL</sequence>
<name>MGLA_MANSM</name>
<accession>Q65UW1</accession>
<organism>
    <name type="scientific">Mannheimia succiniciproducens (strain KCTC 0769BP / MBEL55E)</name>
    <dbReference type="NCBI Taxonomy" id="221988"/>
    <lineage>
        <taxon>Bacteria</taxon>
        <taxon>Pseudomonadati</taxon>
        <taxon>Pseudomonadota</taxon>
        <taxon>Gammaproteobacteria</taxon>
        <taxon>Pasteurellales</taxon>
        <taxon>Pasteurellaceae</taxon>
        <taxon>Basfia</taxon>
    </lineage>
</organism>
<gene>
    <name evidence="1" type="primary">mglA</name>
    <name type="ordered locus">MS0642</name>
</gene>
<evidence type="ECO:0000255" key="1">
    <source>
        <dbReference type="HAMAP-Rule" id="MF_01717"/>
    </source>
</evidence>
<dbReference type="EC" id="7.5.2.11" evidence="1"/>
<dbReference type="EMBL" id="AE016827">
    <property type="protein sequence ID" value="AAU37249.1"/>
    <property type="molecule type" value="Genomic_DNA"/>
</dbReference>
<dbReference type="RefSeq" id="WP_011199821.1">
    <property type="nucleotide sequence ID" value="NC_006300.1"/>
</dbReference>
<dbReference type="SMR" id="Q65UW1"/>
<dbReference type="STRING" id="221988.MS0642"/>
<dbReference type="KEGG" id="msu:MS0642"/>
<dbReference type="eggNOG" id="COG1129">
    <property type="taxonomic scope" value="Bacteria"/>
</dbReference>
<dbReference type="HOGENOM" id="CLU_000604_92_3_6"/>
<dbReference type="OrthoDB" id="9776369at2"/>
<dbReference type="Proteomes" id="UP000000607">
    <property type="component" value="Chromosome"/>
</dbReference>
<dbReference type="GO" id="GO:0005886">
    <property type="term" value="C:plasma membrane"/>
    <property type="evidence" value="ECO:0007669"/>
    <property type="project" value="UniProtKB-SubCell"/>
</dbReference>
<dbReference type="GO" id="GO:0005524">
    <property type="term" value="F:ATP binding"/>
    <property type="evidence" value="ECO:0007669"/>
    <property type="project" value="UniProtKB-KW"/>
</dbReference>
<dbReference type="GO" id="GO:0016887">
    <property type="term" value="F:ATP hydrolysis activity"/>
    <property type="evidence" value="ECO:0007669"/>
    <property type="project" value="InterPro"/>
</dbReference>
<dbReference type="CDD" id="cd03216">
    <property type="entry name" value="ABC_Carb_Monos_I"/>
    <property type="match status" value="1"/>
</dbReference>
<dbReference type="CDD" id="cd03215">
    <property type="entry name" value="ABC_Carb_Monos_II"/>
    <property type="match status" value="1"/>
</dbReference>
<dbReference type="FunFam" id="3.40.50.300:FF:000126">
    <property type="entry name" value="Galactose/methyl galactoside import ATP-binding protein MglA"/>
    <property type="match status" value="1"/>
</dbReference>
<dbReference type="FunFam" id="3.40.50.300:FF:000127">
    <property type="entry name" value="Ribose import ATP-binding protein RbsA"/>
    <property type="match status" value="1"/>
</dbReference>
<dbReference type="Gene3D" id="3.40.50.300">
    <property type="entry name" value="P-loop containing nucleotide triphosphate hydrolases"/>
    <property type="match status" value="2"/>
</dbReference>
<dbReference type="InterPro" id="IPR003593">
    <property type="entry name" value="AAA+_ATPase"/>
</dbReference>
<dbReference type="InterPro" id="IPR050107">
    <property type="entry name" value="ABC_carbohydrate_import_ATPase"/>
</dbReference>
<dbReference type="InterPro" id="IPR003439">
    <property type="entry name" value="ABC_transporter-like_ATP-bd"/>
</dbReference>
<dbReference type="InterPro" id="IPR017871">
    <property type="entry name" value="ABC_transporter-like_CS"/>
</dbReference>
<dbReference type="InterPro" id="IPR027417">
    <property type="entry name" value="P-loop_NTPase"/>
</dbReference>
<dbReference type="NCBIfam" id="NF008215">
    <property type="entry name" value="PRK10982.1"/>
    <property type="match status" value="1"/>
</dbReference>
<dbReference type="PANTHER" id="PTHR43790">
    <property type="entry name" value="CARBOHYDRATE TRANSPORT ATP-BINDING PROTEIN MG119-RELATED"/>
    <property type="match status" value="1"/>
</dbReference>
<dbReference type="PANTHER" id="PTHR43790:SF7">
    <property type="entry name" value="GALACTOSE_METHYL GALACTOSIDE IMPORT ATP-BINDING PROTEIN MGLA"/>
    <property type="match status" value="1"/>
</dbReference>
<dbReference type="Pfam" id="PF00005">
    <property type="entry name" value="ABC_tran"/>
    <property type="match status" value="2"/>
</dbReference>
<dbReference type="SMART" id="SM00382">
    <property type="entry name" value="AAA"/>
    <property type="match status" value="2"/>
</dbReference>
<dbReference type="SUPFAM" id="SSF52540">
    <property type="entry name" value="P-loop containing nucleoside triphosphate hydrolases"/>
    <property type="match status" value="2"/>
</dbReference>
<dbReference type="PROSITE" id="PS00211">
    <property type="entry name" value="ABC_TRANSPORTER_1"/>
    <property type="match status" value="1"/>
</dbReference>
<dbReference type="PROSITE" id="PS50893">
    <property type="entry name" value="ABC_TRANSPORTER_2"/>
    <property type="match status" value="2"/>
</dbReference>
<dbReference type="PROSITE" id="PS51260">
    <property type="entry name" value="MGLA"/>
    <property type="match status" value="1"/>
</dbReference>
<keyword id="KW-0067">ATP-binding</keyword>
<keyword id="KW-0997">Cell inner membrane</keyword>
<keyword id="KW-1003">Cell membrane</keyword>
<keyword id="KW-0472">Membrane</keyword>
<keyword id="KW-0547">Nucleotide-binding</keyword>
<keyword id="KW-0677">Repeat</keyword>
<keyword id="KW-0762">Sugar transport</keyword>
<keyword id="KW-1278">Translocase</keyword>
<keyword id="KW-0813">Transport</keyword>
<feature type="chain" id="PRO_0000261369" description="Galactose/methyl galactoside import ATP-binding protein MglA">
    <location>
        <begin position="1"/>
        <end position="506"/>
    </location>
</feature>
<feature type="domain" description="ABC transporter 1" evidence="1">
    <location>
        <begin position="14"/>
        <end position="249"/>
    </location>
</feature>
<feature type="domain" description="ABC transporter 2" evidence="1">
    <location>
        <begin position="264"/>
        <end position="506"/>
    </location>
</feature>
<feature type="binding site" evidence="1">
    <location>
        <begin position="46"/>
        <end position="53"/>
    </location>
    <ligand>
        <name>ATP</name>
        <dbReference type="ChEBI" id="CHEBI:30616"/>
    </ligand>
</feature>
<protein>
    <recommendedName>
        <fullName evidence="1">Galactose/methyl galactoside import ATP-binding protein MglA</fullName>
        <ecNumber evidence="1">7.5.2.11</ecNumber>
    </recommendedName>
</protein>
<comment type="function">
    <text evidence="1">Part of the ABC transporter complex MglABC involved in galactose/methyl galactoside import. Responsible for energy coupling to the transport system.</text>
</comment>
<comment type="catalytic activity">
    <reaction evidence="1">
        <text>D-galactose(out) + ATP + H2O = D-galactose(in) + ADP + phosphate + H(+)</text>
        <dbReference type="Rhea" id="RHEA:60156"/>
        <dbReference type="ChEBI" id="CHEBI:4139"/>
        <dbReference type="ChEBI" id="CHEBI:15377"/>
        <dbReference type="ChEBI" id="CHEBI:15378"/>
        <dbReference type="ChEBI" id="CHEBI:30616"/>
        <dbReference type="ChEBI" id="CHEBI:43474"/>
        <dbReference type="ChEBI" id="CHEBI:456216"/>
        <dbReference type="EC" id="7.5.2.11"/>
    </reaction>
    <physiologicalReaction direction="left-to-right" evidence="1">
        <dbReference type="Rhea" id="RHEA:60157"/>
    </physiologicalReaction>
</comment>
<comment type="catalytic activity">
    <reaction evidence="1">
        <text>methyl beta-D-galactoside(out) + ATP + H2O = methyl beta-D-galactoside(in) + ADP + phosphate + H(+)</text>
        <dbReference type="Rhea" id="RHEA:72531"/>
        <dbReference type="ChEBI" id="CHEBI:15377"/>
        <dbReference type="ChEBI" id="CHEBI:15378"/>
        <dbReference type="ChEBI" id="CHEBI:17540"/>
        <dbReference type="ChEBI" id="CHEBI:30616"/>
        <dbReference type="ChEBI" id="CHEBI:43474"/>
        <dbReference type="ChEBI" id="CHEBI:456216"/>
    </reaction>
    <physiologicalReaction direction="left-to-right" evidence="1">
        <dbReference type="Rhea" id="RHEA:72532"/>
    </physiologicalReaction>
</comment>
<comment type="subunit">
    <text evidence="1">The complex is composed of one ATP-binding protein (MglA), two transmembrane proteins (MglC) and a solute-binding protein (MglB).</text>
</comment>
<comment type="subcellular location">
    <subcellularLocation>
        <location evidence="1">Cell inner membrane</location>
        <topology evidence="1">Peripheral membrane protein</topology>
    </subcellularLocation>
</comment>
<comment type="similarity">
    <text evidence="1">Belongs to the ABC transporter superfamily. Galactose/methyl galactoside importer (TC 3.A.1.2.3) family.</text>
</comment>
<proteinExistence type="inferred from homology"/>